<sequence>MYFEIYKDAKGEYRWRLKAANHEIIAQGEGYTSKQNCQHAVDLLKSTTAATPVKEV</sequence>
<proteinExistence type="inferred from homology"/>
<evidence type="ECO:0000305" key="1"/>
<comment type="similarity">
    <text evidence="1">Belongs to the UPF0339 family.</text>
</comment>
<feature type="chain" id="PRO_0000218139" description="UPF0339 protein NMA1193/NMA1859">
    <location>
        <begin position="1"/>
        <end position="56"/>
    </location>
</feature>
<name>Y1193_NEIMA</name>
<gene>
    <name type="ordered locus">NMA1193</name>
</gene>
<gene>
    <name type="ordered locus">NMA1859</name>
</gene>
<protein>
    <recommendedName>
        <fullName>UPF0339 protein NMA1193/NMA1859</fullName>
    </recommendedName>
</protein>
<accession>Q9JRE9</accession>
<accession>A1IRK5</accession>
<organism>
    <name type="scientific">Neisseria meningitidis serogroup A / serotype 4A (strain DSM 15465 / Z2491)</name>
    <dbReference type="NCBI Taxonomy" id="122587"/>
    <lineage>
        <taxon>Bacteria</taxon>
        <taxon>Pseudomonadati</taxon>
        <taxon>Pseudomonadota</taxon>
        <taxon>Betaproteobacteria</taxon>
        <taxon>Neisseriales</taxon>
        <taxon>Neisseriaceae</taxon>
        <taxon>Neisseria</taxon>
    </lineage>
</organism>
<dbReference type="EMBL" id="AL157959">
    <property type="protein sequence ID" value="CAM08393.1"/>
    <property type="molecule type" value="Genomic_DNA"/>
</dbReference>
<dbReference type="EMBL" id="AL157959">
    <property type="protein sequence ID" value="CAM08978.1"/>
    <property type="molecule type" value="Genomic_DNA"/>
</dbReference>
<dbReference type="PIR" id="B81123">
    <property type="entry name" value="B81123"/>
</dbReference>
<dbReference type="RefSeq" id="WP_002215844.1">
    <property type="nucleotide sequence ID" value="NC_003116.1"/>
</dbReference>
<dbReference type="SMR" id="Q9JRE9"/>
<dbReference type="EnsemblBacteria" id="CAM08393">
    <property type="protein sequence ID" value="CAM08393"/>
    <property type="gene ID" value="NMA1193"/>
</dbReference>
<dbReference type="EnsemblBacteria" id="CAM08978">
    <property type="protein sequence ID" value="CAM08978"/>
    <property type="gene ID" value="NMA1859"/>
</dbReference>
<dbReference type="KEGG" id="nma:NMA1193"/>
<dbReference type="KEGG" id="nma:NMA1859"/>
<dbReference type="HOGENOM" id="CLU_163886_3_1_4"/>
<dbReference type="Proteomes" id="UP000000626">
    <property type="component" value="Chromosome"/>
</dbReference>
<dbReference type="Gene3D" id="3.30.160.160">
    <property type="entry name" value="YegP-like"/>
    <property type="match status" value="1"/>
</dbReference>
<dbReference type="InterPro" id="IPR010879">
    <property type="entry name" value="DUF1508"/>
</dbReference>
<dbReference type="InterPro" id="IPR036913">
    <property type="entry name" value="YegP-like_sf"/>
</dbReference>
<dbReference type="Pfam" id="PF07411">
    <property type="entry name" value="DUF1508"/>
    <property type="match status" value="1"/>
</dbReference>
<dbReference type="SUPFAM" id="SSF160113">
    <property type="entry name" value="YegP-like"/>
    <property type="match status" value="1"/>
</dbReference>
<reference key="1">
    <citation type="journal article" date="2000" name="Nature">
        <title>Complete DNA sequence of a serogroup A strain of Neisseria meningitidis Z2491.</title>
        <authorList>
            <person name="Parkhill J."/>
            <person name="Achtman M."/>
            <person name="James K.D."/>
            <person name="Bentley S.D."/>
            <person name="Churcher C.M."/>
            <person name="Klee S.R."/>
            <person name="Morelli G."/>
            <person name="Basham D."/>
            <person name="Brown D."/>
            <person name="Chillingworth T."/>
            <person name="Davies R.M."/>
            <person name="Davis P."/>
            <person name="Devlin K."/>
            <person name="Feltwell T."/>
            <person name="Hamlin N."/>
            <person name="Holroyd S."/>
            <person name="Jagels K."/>
            <person name="Leather S."/>
            <person name="Moule S."/>
            <person name="Mungall K.L."/>
            <person name="Quail M.A."/>
            <person name="Rajandream M.A."/>
            <person name="Rutherford K.M."/>
            <person name="Simmonds M."/>
            <person name="Skelton J."/>
            <person name="Whitehead S."/>
            <person name="Spratt B.G."/>
            <person name="Barrell B.G."/>
        </authorList>
    </citation>
    <scope>NUCLEOTIDE SEQUENCE [LARGE SCALE GENOMIC DNA]</scope>
    <source>
        <strain>DSM 15465 / Z2491</strain>
    </source>
</reference>